<reference key="1">
    <citation type="submission" date="2006-08" db="EMBL/GenBank/DDBJ databases">
        <title>Complete sequence of Shewanella frigidimarina NCIMB 400.</title>
        <authorList>
            <consortium name="US DOE Joint Genome Institute"/>
            <person name="Copeland A."/>
            <person name="Lucas S."/>
            <person name="Lapidus A."/>
            <person name="Barry K."/>
            <person name="Detter J.C."/>
            <person name="Glavina del Rio T."/>
            <person name="Hammon N."/>
            <person name="Israni S."/>
            <person name="Dalin E."/>
            <person name="Tice H."/>
            <person name="Pitluck S."/>
            <person name="Fredrickson J.K."/>
            <person name="Kolker E."/>
            <person name="McCuel L.A."/>
            <person name="DiChristina T."/>
            <person name="Nealson K.H."/>
            <person name="Newman D."/>
            <person name="Tiedje J.M."/>
            <person name="Zhou J."/>
            <person name="Romine M.F."/>
            <person name="Culley D.E."/>
            <person name="Serres M."/>
            <person name="Chertkov O."/>
            <person name="Brettin T."/>
            <person name="Bruce D."/>
            <person name="Han C."/>
            <person name="Tapia R."/>
            <person name="Gilna P."/>
            <person name="Schmutz J."/>
            <person name="Larimer F."/>
            <person name="Land M."/>
            <person name="Hauser L."/>
            <person name="Kyrpides N."/>
            <person name="Mikhailova N."/>
            <person name="Richardson P."/>
        </authorList>
    </citation>
    <scope>NUCLEOTIDE SEQUENCE [LARGE SCALE GENOMIC DNA]</scope>
    <source>
        <strain>NCIMB 400</strain>
    </source>
</reference>
<protein>
    <recommendedName>
        <fullName evidence="1">Protein SlyX homolog</fullName>
    </recommendedName>
</protein>
<comment type="similarity">
    <text evidence="1">Belongs to the SlyX family.</text>
</comment>
<keyword id="KW-1185">Reference proteome</keyword>
<sequence>MESVLQKIDDLEMKLSFQDISIEELNQEVIKLNALVARQQQQMLLMVNKLHSIEPSNMASSAEETPPPHY</sequence>
<proteinExistence type="inferred from homology"/>
<gene>
    <name evidence="1" type="primary">slyX</name>
    <name type="ordered locus">Sfri_3240</name>
</gene>
<organism>
    <name type="scientific">Shewanella frigidimarina (strain NCIMB 400)</name>
    <dbReference type="NCBI Taxonomy" id="318167"/>
    <lineage>
        <taxon>Bacteria</taxon>
        <taxon>Pseudomonadati</taxon>
        <taxon>Pseudomonadota</taxon>
        <taxon>Gammaproteobacteria</taxon>
        <taxon>Alteromonadales</taxon>
        <taxon>Shewanellaceae</taxon>
        <taxon>Shewanella</taxon>
    </lineage>
</organism>
<accession>Q07Y38</accession>
<name>SLYX_SHEFN</name>
<feature type="chain" id="PRO_1000045735" description="Protein SlyX homolog">
    <location>
        <begin position="1"/>
        <end position="70"/>
    </location>
</feature>
<evidence type="ECO:0000255" key="1">
    <source>
        <dbReference type="HAMAP-Rule" id="MF_00715"/>
    </source>
</evidence>
<dbReference type="EMBL" id="CP000447">
    <property type="protein sequence ID" value="ABI73076.1"/>
    <property type="molecule type" value="Genomic_DNA"/>
</dbReference>
<dbReference type="RefSeq" id="WP_011638679.1">
    <property type="nucleotide sequence ID" value="NC_008345.1"/>
</dbReference>
<dbReference type="SMR" id="Q07Y38"/>
<dbReference type="STRING" id="318167.Sfri_3240"/>
<dbReference type="KEGG" id="sfr:Sfri_3240"/>
<dbReference type="eggNOG" id="COG2900">
    <property type="taxonomic scope" value="Bacteria"/>
</dbReference>
<dbReference type="HOGENOM" id="CLU_180796_4_2_6"/>
<dbReference type="OrthoDB" id="5771733at2"/>
<dbReference type="Proteomes" id="UP000000684">
    <property type="component" value="Chromosome"/>
</dbReference>
<dbReference type="Gene3D" id="1.20.5.300">
    <property type="match status" value="1"/>
</dbReference>
<dbReference type="HAMAP" id="MF_00715">
    <property type="entry name" value="SlyX"/>
    <property type="match status" value="1"/>
</dbReference>
<dbReference type="InterPro" id="IPR007236">
    <property type="entry name" value="SlyX"/>
</dbReference>
<dbReference type="PANTHER" id="PTHR36508">
    <property type="entry name" value="PROTEIN SLYX"/>
    <property type="match status" value="1"/>
</dbReference>
<dbReference type="PANTHER" id="PTHR36508:SF1">
    <property type="entry name" value="PROTEIN SLYX"/>
    <property type="match status" value="1"/>
</dbReference>
<dbReference type="Pfam" id="PF04102">
    <property type="entry name" value="SlyX"/>
    <property type="match status" value="1"/>
</dbReference>